<keyword id="KW-0131">Cell cycle</keyword>
<keyword id="KW-0132">Cell division</keyword>
<keyword id="KW-0175">Coiled coil</keyword>
<keyword id="KW-0963">Cytoplasm</keyword>
<keyword id="KW-0206">Cytoskeleton</keyword>
<keyword id="KW-0498">Mitosis</keyword>
<keyword id="KW-1185">Reference proteome</keyword>
<gene>
    <name type="primary">spice1</name>
    <name type="synonym">ccdc52</name>
</gene>
<comment type="function">
    <text evidence="1">Regulator required for centriole duplication.</text>
</comment>
<comment type="subcellular location">
    <subcellularLocation>
        <location evidence="1">Cytoplasm</location>
        <location evidence="1">Cytoskeleton</location>
        <location evidence="1">Microtubule organizing center</location>
        <location evidence="1">Centrosome</location>
        <location evidence="1">Centriole</location>
    </subcellularLocation>
    <subcellularLocation>
        <location evidence="1">Cytoplasm</location>
        <location evidence="1">Cytoskeleton</location>
        <location evidence="1">Spindle</location>
    </subcellularLocation>
</comment>
<reference key="1">
    <citation type="submission" date="2004-07" db="EMBL/GenBank/DDBJ databases">
        <authorList>
            <consortium name="NIH - Xenopus Gene Collection (XGC) project"/>
        </authorList>
    </citation>
    <scope>NUCLEOTIDE SEQUENCE [LARGE SCALE MRNA]</scope>
    <source>
        <tissue>Oocyte</tissue>
    </source>
</reference>
<proteinExistence type="evidence at transcript level"/>
<accession>Q6DF94</accession>
<feature type="chain" id="PRO_0000282417" description="Spindle and centriole-associated protein 1">
    <location>
        <begin position="1"/>
        <end position="793"/>
    </location>
</feature>
<feature type="region of interest" description="Disordered" evidence="3">
    <location>
        <begin position="1"/>
        <end position="29"/>
    </location>
</feature>
<feature type="region of interest" description="Disordered" evidence="3">
    <location>
        <begin position="519"/>
        <end position="542"/>
    </location>
</feature>
<feature type="region of interest" description="Disordered" evidence="3">
    <location>
        <begin position="718"/>
        <end position="783"/>
    </location>
</feature>
<feature type="coiled-coil region" evidence="2">
    <location>
        <begin position="312"/>
        <end position="405"/>
    </location>
</feature>
<feature type="coiled-coil region" evidence="2">
    <location>
        <begin position="622"/>
        <end position="712"/>
    </location>
</feature>
<feature type="compositionally biased region" description="Basic residues" evidence="3">
    <location>
        <begin position="18"/>
        <end position="27"/>
    </location>
</feature>
<feature type="compositionally biased region" description="Polar residues" evidence="3">
    <location>
        <begin position="718"/>
        <end position="739"/>
    </location>
</feature>
<feature type="compositionally biased region" description="Low complexity" evidence="3">
    <location>
        <begin position="740"/>
        <end position="753"/>
    </location>
</feature>
<feature type="compositionally biased region" description="Polar residues" evidence="3">
    <location>
        <begin position="754"/>
        <end position="778"/>
    </location>
</feature>
<dbReference type="EMBL" id="BC076847">
    <property type="protein sequence ID" value="AAH76847.1"/>
    <property type="molecule type" value="mRNA"/>
</dbReference>
<dbReference type="RefSeq" id="NP_001086591.1">
    <property type="nucleotide sequence ID" value="NM_001093122.1"/>
</dbReference>
<dbReference type="SMR" id="Q6DF94"/>
<dbReference type="DNASU" id="446426"/>
<dbReference type="GeneID" id="446426"/>
<dbReference type="KEGG" id="xla:446426"/>
<dbReference type="AGR" id="Xenbase:XB-GENE-993585"/>
<dbReference type="CTD" id="446426"/>
<dbReference type="Xenbase" id="XB-GENE-993585">
    <property type="gene designation" value="spice1.L"/>
</dbReference>
<dbReference type="OrthoDB" id="6361178at2759"/>
<dbReference type="Proteomes" id="UP000186698">
    <property type="component" value="Chromosome 2L"/>
</dbReference>
<dbReference type="Bgee" id="446426">
    <property type="expression patterns" value="Expressed in egg cell and 18 other cell types or tissues"/>
</dbReference>
<dbReference type="GO" id="GO:0005814">
    <property type="term" value="C:centriole"/>
    <property type="evidence" value="ECO:0000250"/>
    <property type="project" value="UniProtKB"/>
</dbReference>
<dbReference type="GO" id="GO:0005813">
    <property type="term" value="C:centrosome"/>
    <property type="evidence" value="ECO:0000318"/>
    <property type="project" value="GO_Central"/>
</dbReference>
<dbReference type="GO" id="GO:0005737">
    <property type="term" value="C:cytoplasm"/>
    <property type="evidence" value="ECO:0007669"/>
    <property type="project" value="UniProtKB-KW"/>
</dbReference>
<dbReference type="GO" id="GO:0005819">
    <property type="term" value="C:spindle"/>
    <property type="evidence" value="ECO:0000250"/>
    <property type="project" value="UniProtKB"/>
</dbReference>
<dbReference type="GO" id="GO:0051301">
    <property type="term" value="P:cell division"/>
    <property type="evidence" value="ECO:0007669"/>
    <property type="project" value="UniProtKB-KW"/>
</dbReference>
<dbReference type="GO" id="GO:0051310">
    <property type="term" value="P:metaphase chromosome alignment"/>
    <property type="evidence" value="ECO:0000318"/>
    <property type="project" value="GO_Central"/>
</dbReference>
<dbReference type="GO" id="GO:0090307">
    <property type="term" value="P:mitotic spindle assembly"/>
    <property type="evidence" value="ECO:0000318"/>
    <property type="project" value="GO_Central"/>
</dbReference>
<dbReference type="GO" id="GO:0046599">
    <property type="term" value="P:regulation of centriole replication"/>
    <property type="evidence" value="ECO:0000250"/>
    <property type="project" value="UniProtKB"/>
</dbReference>
<dbReference type="InterPro" id="IPR031387">
    <property type="entry name" value="SPICE1"/>
</dbReference>
<dbReference type="PANTHER" id="PTHR31167">
    <property type="entry name" value="SPINDLE AND CENTRIOLE ASSOCIATED PROTEIN 1 SPICE1"/>
    <property type="match status" value="1"/>
</dbReference>
<dbReference type="PANTHER" id="PTHR31167:SF3">
    <property type="entry name" value="SPINDLE AND CENTRIOLE-ASSOCIATED PROTEIN 1"/>
    <property type="match status" value="1"/>
</dbReference>
<dbReference type="Pfam" id="PF15678">
    <property type="entry name" value="SPICE"/>
    <property type="match status" value="1"/>
</dbReference>
<evidence type="ECO:0000250" key="1"/>
<evidence type="ECO:0000255" key="2"/>
<evidence type="ECO:0000256" key="3">
    <source>
        <dbReference type="SAM" id="MobiDB-lite"/>
    </source>
</evidence>
<organism>
    <name type="scientific">Xenopus laevis</name>
    <name type="common">African clawed frog</name>
    <dbReference type="NCBI Taxonomy" id="8355"/>
    <lineage>
        <taxon>Eukaryota</taxon>
        <taxon>Metazoa</taxon>
        <taxon>Chordata</taxon>
        <taxon>Craniata</taxon>
        <taxon>Vertebrata</taxon>
        <taxon>Euteleostomi</taxon>
        <taxon>Amphibia</taxon>
        <taxon>Batrachia</taxon>
        <taxon>Anura</taxon>
        <taxon>Pipoidea</taxon>
        <taxon>Pipidae</taxon>
        <taxon>Xenopodinae</taxon>
        <taxon>Xenopus</taxon>
        <taxon>Xenopus</taxon>
    </lineage>
</organism>
<protein>
    <recommendedName>
        <fullName>Spindle and centriole-associated protein 1</fullName>
    </recommendedName>
    <alternativeName>
        <fullName>Coiled-coil domain-containing protein 52</fullName>
    </alternativeName>
</protein>
<name>SPICE_XENLA</name>
<sequence length="793" mass="87704">MSYLRASRTSSNLSLAKKPSKTRKKLQARKEWDSSVNDLTVFRATNEELEHRREIHRSKNQWLARWELQNKANYKQSEKENSTQFENSRLALMKEILSDQYLMNDVLERSDRALAVVKDLFGDAPRRHTGFPNVTMAPSCDLETSRAPIVRKKDPPTQLSILSESVMDSQAINEVDKSLSRSEYSDSEAEVSISIQPNMKAERVQQLLTGEGPKSEAFITPHKSEGDPSQTQCALNATTAVNRVKVRRTEEESPKPEESDSIIGRVLNPHGKANKRISLKGKKKRTTNQSQTKDFSTFKASERDLTTSNQSSLGLLNSMIMEVEQDLAEYERQTGREVLSAPPAHGLTGFTLSLVSSLKRVVSYLKESDLLLQREVRERQNLQGELVEQRLMLDALTAEILSLKEGGNIHENHSQTKQCPEVDGDKLTSITQEAKTFPGLNGETCRTSADCGLSKVNQFMDSQDVQDTDEKHSRLGVSKDEFGARLYPQGRPAEEPRLASALPSHVFQQAVLLSPPRQKTVGNLSSHSAVPKRAANRLPSPPADLMTAPVEIEWPESKLFQRSINYKNTAALIERGTMVPGQENSKHVYSSAQGSERVNQHPTESTKEVQGLEIGESQINPLQNEDLVSQMQQLALQNAALKAQLEQIHFSPEGNAPEEAAAEQLHNPEPATDTPARAALVPVSLEMRIAELNRQSAEARNKLLKLIEQQKQSIVVSPTLSPITPQGRRTGSSLDTTPLSSCSTSGRRSSGASNKSESISTSVGSLRSASTGRRSQAANDRGEGWFALSAHIS</sequence>